<sequence length="446" mass="49064">MSFKEEYQKKLKTADEAVKVVKSGDWLEYGWCVTTPAALDKALAKRMPELENINIRGGIVMWPLEITKIDSPADHFTWNSWHMGGLERKWIKEGFSYYAPIRYSELPGYYRNYIDHVDVAMMQVAPMDEHGFFNFGPSASHLAAMLEKADCVIVEVNENMPRCLGGFEEGVHISKVDMIVEGENPAIAELGGGGAATDVDKAVAKLIVDQIPNGACLQLGIGGMPNAVGSMIAESDLKDLGVHTEMYVDAFVDIAKAGKITGARKNIDRYRQTYAFAAGTKKLYDYLNDNPECMSAPVNYTNDIARVSSIDNFISINNAVDVDLYGQISAESSGIKQISGAGGQLDFVMGAYLSNGGKSFVCLSSTFTDKAGQMHSRILPTLHNGSIVTDTRANAHYIVTEYGMANMKGLSAWQRAEALINIAHPDFRDQLIKDAEKAQIWRRSNK</sequence>
<proteinExistence type="evidence at protein level"/>
<feature type="chain" id="PRO_0000447681" description="Butyryl-CoA:acetate CoA-transferase">
    <location>
        <begin position="1"/>
        <end position="446"/>
    </location>
</feature>
<feature type="active site" description="5-glutamyl coenzyme A thioester intermediate" evidence="1 2">
    <location>
        <position position="245"/>
    </location>
</feature>
<feature type="binding site" evidence="1 2">
    <location>
        <begin position="220"/>
        <end position="224"/>
    </location>
    <ligand>
        <name>CoA</name>
        <dbReference type="ChEBI" id="CHEBI:57287"/>
    </ligand>
</feature>
<feature type="binding site" evidence="2">
    <location>
        <position position="320"/>
    </location>
    <ligand>
        <name>CoA</name>
        <dbReference type="ChEBI" id="CHEBI:57287"/>
    </ligand>
</feature>
<feature type="binding site" evidence="1 2">
    <location>
        <position position="343"/>
    </location>
    <ligand>
        <name>CoA</name>
        <dbReference type="ChEBI" id="CHEBI:57287"/>
    </ligand>
</feature>
<feature type="binding site" evidence="1">
    <location>
        <position position="370"/>
    </location>
    <ligand>
        <name>CoA</name>
        <dbReference type="ChEBI" id="CHEBI:57287"/>
    </ligand>
</feature>
<name>BCACT_ANACD</name>
<accession>B0MC58</accession>
<accession>Q2QB27</accession>
<reference key="1">
    <citation type="journal article" date="2006" name="Microbiology">
        <title>A novel class of CoA-transferase involved in short-chain fatty acid metabolism in butyrate-producing human colonic bacteria.</title>
        <authorList>
            <person name="Charrier C."/>
            <person name="Duncan G.J."/>
            <person name="Reid M.D."/>
            <person name="Rucklidge G.J."/>
            <person name="Henderson D."/>
            <person name="Young P."/>
            <person name="Russell V.J."/>
            <person name="Aminov R.I."/>
            <person name="Flint H.J."/>
            <person name="Louis P."/>
        </authorList>
    </citation>
    <scope>NUCLEOTIDE SEQUENCE [GENOMIC DNA]</scope>
    <scope>CATALYTIC ACTIVITY</scope>
    <scope>FUNCTION</scope>
    <source>
        <strain>DSM 14662 / CCUG 47493 / JCM 13470 / NCIMB 13811 / L1-92</strain>
    </source>
</reference>
<reference key="2">
    <citation type="submission" date="2007-11" db="EMBL/GenBank/DDBJ databases">
        <title>Draft genome sequence of Anaerostipes caccae (DSM 14662).</title>
        <authorList>
            <person name="Sudarsanam P."/>
            <person name="Ley R."/>
            <person name="Guruge J."/>
            <person name="Turnbaugh P.J."/>
            <person name="Mahowald M."/>
            <person name="Liep D."/>
            <person name="Gordon J."/>
        </authorList>
    </citation>
    <scope>NUCLEOTIDE SEQUENCE [LARGE SCALE GENOMIC DNA]</scope>
    <source>
        <strain>DSM 14662 / CCUG 47493 / JCM 13470 / NCIMB 13811 / L1-92</strain>
    </source>
</reference>
<reference key="3">
    <citation type="submission" date="2007-11" db="EMBL/GenBank/DDBJ databases">
        <authorList>
            <person name="Fulton L."/>
            <person name="Clifton S."/>
            <person name="Fulton B."/>
            <person name="Xu J."/>
            <person name="Minx P."/>
            <person name="Pepin K.H."/>
            <person name="Johnson M."/>
            <person name="Thiruvilangam P."/>
            <person name="Bhonagiri V."/>
            <person name="Nash W.E."/>
            <person name="Mardis E.R."/>
            <person name="Wilson R.K."/>
        </authorList>
    </citation>
    <scope>NUCLEOTIDE SEQUENCE [LARGE SCALE GENOMIC DNA]</scope>
    <source>
        <strain>DSM 14662 / CCUG 47493 / JCM 13470 / NCIMB 13811 / L1-92</strain>
    </source>
</reference>
<gene>
    <name type="ORF">ANACAC_01149</name>
</gene>
<evidence type="ECO:0000250" key="1">
    <source>
        <dbReference type="UniProtKB" id="B3EY95"/>
    </source>
</evidence>
<evidence type="ECO:0000255" key="2">
    <source>
        <dbReference type="HAMAP-Rule" id="MF_03227"/>
    </source>
</evidence>
<evidence type="ECO:0000269" key="3">
    <source>
    </source>
</evidence>
<evidence type="ECO:0000303" key="4">
    <source>
    </source>
</evidence>
<evidence type="ECO:0000305" key="5"/>
<evidence type="ECO:0000305" key="6">
    <source>
    </source>
</evidence>
<protein>
    <recommendedName>
        <fullName evidence="2 4">Butyryl-CoA:acetate CoA-transferase</fullName>
        <ecNumber evidence="2">2.8.3.-</ecNumber>
    </recommendedName>
    <alternativeName>
        <fullName evidence="2">Butyryl-CoA CoA-transferase</fullName>
    </alternativeName>
</protein>
<organism>
    <name type="scientific">Anaerostipes caccae (strain DSM 14662 / CCUG 47493 / JCM 13470 / NCIMB 13811 / L1-92)</name>
    <dbReference type="NCBI Taxonomy" id="411490"/>
    <lineage>
        <taxon>Bacteria</taxon>
        <taxon>Bacillati</taxon>
        <taxon>Bacillota</taxon>
        <taxon>Clostridia</taxon>
        <taxon>Lachnospirales</taxon>
        <taxon>Lachnospiraceae</taxon>
        <taxon>Anaerostipes</taxon>
    </lineage>
</organism>
<dbReference type="EC" id="2.8.3.-" evidence="2"/>
<dbReference type="EMBL" id="DQ151450">
    <property type="protein sequence ID" value="ABA39273.1"/>
    <property type="molecule type" value="Genomic_DNA"/>
</dbReference>
<dbReference type="EMBL" id="ABAX03000012">
    <property type="protein sequence ID" value="EDR97528.1"/>
    <property type="molecule type" value="Genomic_DNA"/>
</dbReference>
<dbReference type="RefSeq" id="WP_006566634.1">
    <property type="nucleotide sequence ID" value="NZ_AP023027.1"/>
</dbReference>
<dbReference type="SMR" id="B0MC58"/>
<dbReference type="STRING" id="411490.ANACAC_01149"/>
<dbReference type="eggNOG" id="COG0427">
    <property type="taxonomic scope" value="Bacteria"/>
</dbReference>
<dbReference type="HOGENOM" id="CLU_030703_1_0_9"/>
<dbReference type="BRENDA" id="2.8.3.8">
    <property type="organism ID" value="10485"/>
</dbReference>
<dbReference type="UniPathway" id="UPA00863"/>
<dbReference type="Proteomes" id="UP000004935">
    <property type="component" value="Unassembled WGS sequence"/>
</dbReference>
<dbReference type="GO" id="GO:0008775">
    <property type="term" value="F:acetate CoA-transferase activity"/>
    <property type="evidence" value="ECO:0007669"/>
    <property type="project" value="InterPro"/>
</dbReference>
<dbReference type="GO" id="GO:0018729">
    <property type="term" value="F:propionate CoA-transferase activity"/>
    <property type="evidence" value="ECO:0007669"/>
    <property type="project" value="RHEA"/>
</dbReference>
<dbReference type="GO" id="GO:0006083">
    <property type="term" value="P:acetate metabolic process"/>
    <property type="evidence" value="ECO:0007669"/>
    <property type="project" value="InterPro"/>
</dbReference>
<dbReference type="GO" id="GO:0006084">
    <property type="term" value="P:acetyl-CoA metabolic process"/>
    <property type="evidence" value="ECO:0007669"/>
    <property type="project" value="UniProtKB-UniRule"/>
</dbReference>
<dbReference type="GO" id="GO:0046358">
    <property type="term" value="P:butyrate biosynthetic process"/>
    <property type="evidence" value="ECO:0007669"/>
    <property type="project" value="UniProtKB-UniRule"/>
</dbReference>
<dbReference type="Gene3D" id="3.30.750.70">
    <property type="entry name" value="4-hydroxybutyrate coenzyme like domains"/>
    <property type="match status" value="1"/>
</dbReference>
<dbReference type="Gene3D" id="3.40.1080.20">
    <property type="entry name" value="Acetyl-CoA hydrolase/transferase C-terminal domain"/>
    <property type="match status" value="1"/>
</dbReference>
<dbReference type="Gene3D" id="3.40.1080.10">
    <property type="entry name" value="Glutaconate Coenzyme A-transferase"/>
    <property type="match status" value="1"/>
</dbReference>
<dbReference type="HAMAP" id="MF_03227">
    <property type="entry name" value="But_acet_CoA_trans"/>
    <property type="match status" value="1"/>
</dbReference>
<dbReference type="HAMAP" id="MF_03228">
    <property type="entry name" value="But_CoA_trans"/>
    <property type="match status" value="1"/>
</dbReference>
<dbReference type="InterPro" id="IPR026888">
    <property type="entry name" value="AcetylCoA_hyd_C"/>
</dbReference>
<dbReference type="InterPro" id="IPR038460">
    <property type="entry name" value="AcetylCoA_hyd_C_sf"/>
</dbReference>
<dbReference type="InterPro" id="IPR046433">
    <property type="entry name" value="ActCoA_hydro"/>
</dbReference>
<dbReference type="InterPro" id="IPR003702">
    <property type="entry name" value="ActCoA_hydro_N"/>
</dbReference>
<dbReference type="InterPro" id="IPR023990">
    <property type="entry name" value="Butryl-CoA_acetate_CoA_Tfrase"/>
</dbReference>
<dbReference type="InterPro" id="IPR037171">
    <property type="entry name" value="NagB/RpiA_transferase-like"/>
</dbReference>
<dbReference type="NCBIfam" id="TIGR03948">
    <property type="entry name" value="butyr_acet_CoA"/>
    <property type="match status" value="1"/>
</dbReference>
<dbReference type="PANTHER" id="PTHR21432:SF20">
    <property type="entry name" value="ACETYL-COA HYDROLASE"/>
    <property type="match status" value="1"/>
</dbReference>
<dbReference type="PANTHER" id="PTHR21432">
    <property type="entry name" value="ACETYL-COA HYDROLASE-RELATED"/>
    <property type="match status" value="1"/>
</dbReference>
<dbReference type="Pfam" id="PF13336">
    <property type="entry name" value="AcetylCoA_hyd_C"/>
    <property type="match status" value="1"/>
</dbReference>
<dbReference type="Pfam" id="PF02550">
    <property type="entry name" value="AcetylCoA_hydro"/>
    <property type="match status" value="1"/>
</dbReference>
<dbReference type="SUPFAM" id="SSF100950">
    <property type="entry name" value="NagB/RpiA/CoA transferase-like"/>
    <property type="match status" value="2"/>
</dbReference>
<keyword id="KW-0276">Fatty acid metabolism</keyword>
<keyword id="KW-0443">Lipid metabolism</keyword>
<keyword id="KW-0808">Transferase</keyword>
<comment type="function">
    <text evidence="2 3">Coenzyme A-transferase that converts butyryl-CoA to butyrate. Can also use proprionyl-CoA as substrate in vitro.</text>
</comment>
<comment type="catalytic activity">
    <reaction evidence="2 3">
        <text>butanoate + acetyl-CoA = butanoyl-CoA + acetate</text>
        <dbReference type="Rhea" id="RHEA:30071"/>
        <dbReference type="ChEBI" id="CHEBI:17968"/>
        <dbReference type="ChEBI" id="CHEBI:30089"/>
        <dbReference type="ChEBI" id="CHEBI:57288"/>
        <dbReference type="ChEBI" id="CHEBI:57371"/>
    </reaction>
    <physiologicalReaction direction="right-to-left" evidence="2 3">
        <dbReference type="Rhea" id="RHEA:30073"/>
    </physiologicalReaction>
</comment>
<comment type="catalytic activity">
    <reaction evidence="3">
        <text>propanoate + acetyl-CoA = propanoyl-CoA + acetate</text>
        <dbReference type="Rhea" id="RHEA:23520"/>
        <dbReference type="ChEBI" id="CHEBI:17272"/>
        <dbReference type="ChEBI" id="CHEBI:30089"/>
        <dbReference type="ChEBI" id="CHEBI:57288"/>
        <dbReference type="ChEBI" id="CHEBI:57392"/>
    </reaction>
    <physiologicalReaction direction="right-to-left" evidence="3">
        <dbReference type="Rhea" id="RHEA:23522"/>
    </physiologicalReaction>
</comment>
<comment type="pathway">
    <text evidence="2 5">Lipid metabolism; butanoate metabolism.</text>
</comment>
<comment type="miscellaneous">
    <text evidence="6">The fermentation acid butyrate is of special interest, as it has been shown to serve as the preferred energy source for the gut wall and also influences cell differentiation and apoptosis in the colon, and this seems to aid in protection against colon cancer and inflammatory bowel disease. Formation of butyrate via butyryl-CoA CoA-transferase is the only available route for butyrate synthesis in the majority of human gut isolates.</text>
</comment>
<comment type="similarity">
    <text evidence="2">Belongs to the acetyl-CoA hydrolase/transferase family. Butyryl-CoA CoA-transferase subfamily.</text>
</comment>